<name>YVDC_BACSU</name>
<keyword id="KW-1185">Reference proteome</keyword>
<organism>
    <name type="scientific">Bacillus subtilis (strain 168)</name>
    <dbReference type="NCBI Taxonomy" id="224308"/>
    <lineage>
        <taxon>Bacteria</taxon>
        <taxon>Bacillati</taxon>
        <taxon>Bacillota</taxon>
        <taxon>Bacilli</taxon>
        <taxon>Bacillales</taxon>
        <taxon>Bacillaceae</taxon>
        <taxon>Bacillus</taxon>
    </lineage>
</organism>
<protein>
    <recommendedName>
        <fullName>Uncharacterized protein YvdC</fullName>
    </recommendedName>
</protein>
<proteinExistence type="predicted"/>
<feature type="chain" id="PRO_0000389646" description="Uncharacterized protein YvdC">
    <location>
        <begin position="1"/>
        <end position="106"/>
    </location>
</feature>
<reference key="1">
    <citation type="journal article" date="1997" name="Nature">
        <title>The complete genome sequence of the Gram-positive bacterium Bacillus subtilis.</title>
        <authorList>
            <person name="Kunst F."/>
            <person name="Ogasawara N."/>
            <person name="Moszer I."/>
            <person name="Albertini A.M."/>
            <person name="Alloni G."/>
            <person name="Azevedo V."/>
            <person name="Bertero M.G."/>
            <person name="Bessieres P."/>
            <person name="Bolotin A."/>
            <person name="Borchert S."/>
            <person name="Borriss R."/>
            <person name="Boursier L."/>
            <person name="Brans A."/>
            <person name="Braun M."/>
            <person name="Brignell S.C."/>
            <person name="Bron S."/>
            <person name="Brouillet S."/>
            <person name="Bruschi C.V."/>
            <person name="Caldwell B."/>
            <person name="Capuano V."/>
            <person name="Carter N.M."/>
            <person name="Choi S.-K."/>
            <person name="Codani J.-J."/>
            <person name="Connerton I.F."/>
            <person name="Cummings N.J."/>
            <person name="Daniel R.A."/>
            <person name="Denizot F."/>
            <person name="Devine K.M."/>
            <person name="Duesterhoeft A."/>
            <person name="Ehrlich S.D."/>
            <person name="Emmerson P.T."/>
            <person name="Entian K.-D."/>
            <person name="Errington J."/>
            <person name="Fabret C."/>
            <person name="Ferrari E."/>
            <person name="Foulger D."/>
            <person name="Fritz C."/>
            <person name="Fujita M."/>
            <person name="Fujita Y."/>
            <person name="Fuma S."/>
            <person name="Galizzi A."/>
            <person name="Galleron N."/>
            <person name="Ghim S.-Y."/>
            <person name="Glaser P."/>
            <person name="Goffeau A."/>
            <person name="Golightly E.J."/>
            <person name="Grandi G."/>
            <person name="Guiseppi G."/>
            <person name="Guy B.J."/>
            <person name="Haga K."/>
            <person name="Haiech J."/>
            <person name="Harwood C.R."/>
            <person name="Henaut A."/>
            <person name="Hilbert H."/>
            <person name="Holsappel S."/>
            <person name="Hosono S."/>
            <person name="Hullo M.-F."/>
            <person name="Itaya M."/>
            <person name="Jones L.-M."/>
            <person name="Joris B."/>
            <person name="Karamata D."/>
            <person name="Kasahara Y."/>
            <person name="Klaerr-Blanchard M."/>
            <person name="Klein C."/>
            <person name="Kobayashi Y."/>
            <person name="Koetter P."/>
            <person name="Koningstein G."/>
            <person name="Krogh S."/>
            <person name="Kumano M."/>
            <person name="Kurita K."/>
            <person name="Lapidus A."/>
            <person name="Lardinois S."/>
            <person name="Lauber J."/>
            <person name="Lazarevic V."/>
            <person name="Lee S.-M."/>
            <person name="Levine A."/>
            <person name="Liu H."/>
            <person name="Masuda S."/>
            <person name="Mauel C."/>
            <person name="Medigue C."/>
            <person name="Medina N."/>
            <person name="Mellado R.P."/>
            <person name="Mizuno M."/>
            <person name="Moestl D."/>
            <person name="Nakai S."/>
            <person name="Noback M."/>
            <person name="Noone D."/>
            <person name="O'Reilly M."/>
            <person name="Ogawa K."/>
            <person name="Ogiwara A."/>
            <person name="Oudega B."/>
            <person name="Park S.-H."/>
            <person name="Parro V."/>
            <person name="Pohl T.M."/>
            <person name="Portetelle D."/>
            <person name="Porwollik S."/>
            <person name="Prescott A.M."/>
            <person name="Presecan E."/>
            <person name="Pujic P."/>
            <person name="Purnelle B."/>
            <person name="Rapoport G."/>
            <person name="Rey M."/>
            <person name="Reynolds S."/>
            <person name="Rieger M."/>
            <person name="Rivolta C."/>
            <person name="Rocha E."/>
            <person name="Roche B."/>
            <person name="Rose M."/>
            <person name="Sadaie Y."/>
            <person name="Sato T."/>
            <person name="Scanlan E."/>
            <person name="Schleich S."/>
            <person name="Schroeter R."/>
            <person name="Scoffone F."/>
            <person name="Sekiguchi J."/>
            <person name="Sekowska A."/>
            <person name="Seror S.J."/>
            <person name="Serror P."/>
            <person name="Shin B.-S."/>
            <person name="Soldo B."/>
            <person name="Sorokin A."/>
            <person name="Tacconi E."/>
            <person name="Takagi T."/>
            <person name="Takahashi H."/>
            <person name="Takemaru K."/>
            <person name="Takeuchi M."/>
            <person name="Tamakoshi A."/>
            <person name="Tanaka T."/>
            <person name="Terpstra P."/>
            <person name="Tognoni A."/>
            <person name="Tosato V."/>
            <person name="Uchiyama S."/>
            <person name="Vandenbol M."/>
            <person name="Vannier F."/>
            <person name="Vassarotti A."/>
            <person name="Viari A."/>
            <person name="Wambutt R."/>
            <person name="Wedler E."/>
            <person name="Wedler H."/>
            <person name="Weitzenegger T."/>
            <person name="Winters P."/>
            <person name="Wipat A."/>
            <person name="Yamamoto H."/>
            <person name="Yamane K."/>
            <person name="Yasumoto K."/>
            <person name="Yata K."/>
            <person name="Yoshida K."/>
            <person name="Yoshikawa H.-F."/>
            <person name="Zumstein E."/>
            <person name="Yoshikawa H."/>
            <person name="Danchin A."/>
        </authorList>
    </citation>
    <scope>NUCLEOTIDE SEQUENCE [LARGE SCALE GENOMIC DNA]</scope>
    <source>
        <strain>168</strain>
    </source>
</reference>
<sequence length="106" mass="12343">MQLADAEKWMKEFYEKRGWTEYGPFIRVGFLMEEAGELARAVRAYEIGRDRPDEKESSRAEQKQELIEEMGDVIGNIAILADMYGVSLEDVMKAHQEKLTKRFEHA</sequence>
<dbReference type="EMBL" id="AL009126">
    <property type="protein sequence ID" value="CAB15470.1"/>
    <property type="molecule type" value="Genomic_DNA"/>
</dbReference>
<dbReference type="PIR" id="C70033">
    <property type="entry name" value="C70033"/>
</dbReference>
<dbReference type="RefSeq" id="NP_391345.1">
    <property type="nucleotide sequence ID" value="NC_000964.3"/>
</dbReference>
<dbReference type="RefSeq" id="WP_003242570.1">
    <property type="nucleotide sequence ID" value="NZ_OZ025638.1"/>
</dbReference>
<dbReference type="SMR" id="O32263"/>
<dbReference type="FunCoup" id="O32263">
    <property type="interactions" value="58"/>
</dbReference>
<dbReference type="STRING" id="224308.BSU34650"/>
<dbReference type="PaxDb" id="224308-BSU34650"/>
<dbReference type="EnsemblBacteria" id="CAB15470">
    <property type="protein sequence ID" value="CAB15470"/>
    <property type="gene ID" value="BSU_34650"/>
</dbReference>
<dbReference type="GeneID" id="936515"/>
<dbReference type="KEGG" id="bsu:BSU34650"/>
<dbReference type="PATRIC" id="fig|224308.179.peg.3752"/>
<dbReference type="eggNOG" id="COG1694">
    <property type="taxonomic scope" value="Bacteria"/>
</dbReference>
<dbReference type="InParanoid" id="O32263"/>
<dbReference type="OrthoDB" id="2418132at2"/>
<dbReference type="BioCyc" id="BSUB:BSU34650-MONOMER"/>
<dbReference type="Proteomes" id="UP000001570">
    <property type="component" value="Chromosome"/>
</dbReference>
<dbReference type="CDD" id="cd11523">
    <property type="entry name" value="NTP-PPase"/>
    <property type="match status" value="1"/>
</dbReference>
<dbReference type="Gene3D" id="1.10.287.1080">
    <property type="entry name" value="MazG-like"/>
    <property type="match status" value="1"/>
</dbReference>
<dbReference type="InterPro" id="IPR004518">
    <property type="entry name" value="MazG-like_dom"/>
</dbReference>
<dbReference type="InterPro" id="IPR011411">
    <property type="entry name" value="MazG-related_YvdC"/>
</dbReference>
<dbReference type="InterPro" id="IPR047046">
    <property type="entry name" value="YpjD/YvdC"/>
</dbReference>
<dbReference type="PANTHER" id="PTHR42692:SF2">
    <property type="entry name" value="IG HYPOTHETICAL 16995"/>
    <property type="match status" value="1"/>
</dbReference>
<dbReference type="PANTHER" id="PTHR42692">
    <property type="entry name" value="NUCLEOTIDE PYROPHOSPHOHYDROLASE"/>
    <property type="match status" value="1"/>
</dbReference>
<dbReference type="Pfam" id="PF03819">
    <property type="entry name" value="MazG"/>
    <property type="match status" value="1"/>
</dbReference>
<dbReference type="PIRSF" id="PIRSF036521">
    <property type="entry name" value="UCP036521_pph"/>
    <property type="match status" value="1"/>
</dbReference>
<dbReference type="SUPFAM" id="SSF101386">
    <property type="entry name" value="all-alpha NTP pyrophosphatases"/>
    <property type="match status" value="1"/>
</dbReference>
<accession>O32263</accession>
<gene>
    <name type="primary">yvdC</name>
    <name type="ordered locus">BSU34650</name>
</gene>